<sequence>MFKKFDEKENVSNCIQLKTSVIKGIKNQLLDQFPNIDDWLNQIMPKKDPVKIVRCHEHIEILTVNGELLFFRQREGPFYPTLRLLHKYPFILPHQQVDKGAIKFVLSGANIMCPGLTSPGAKLYPAESDTVVAIMAEGKQHALCVGVMKMSADDIEKVNMGIGIENVHYLNDGLWHMKTYK</sequence>
<proteinExistence type="evidence at transcript level"/>
<organism>
    <name type="scientific">Danio rerio</name>
    <name type="common">Zebrafish</name>
    <name type="synonym">Brachydanio rerio</name>
    <dbReference type="NCBI Taxonomy" id="7955"/>
    <lineage>
        <taxon>Eukaryota</taxon>
        <taxon>Metazoa</taxon>
        <taxon>Chordata</taxon>
        <taxon>Craniata</taxon>
        <taxon>Vertebrata</taxon>
        <taxon>Euteleostomi</taxon>
        <taxon>Actinopterygii</taxon>
        <taxon>Neopterygii</taxon>
        <taxon>Teleostei</taxon>
        <taxon>Ostariophysi</taxon>
        <taxon>Cypriniformes</taxon>
        <taxon>Danionidae</taxon>
        <taxon>Danioninae</taxon>
        <taxon>Danio</taxon>
    </lineage>
</organism>
<name>MCTS1_DANRE</name>
<protein>
    <recommendedName>
        <fullName>Malignant T-cell-amplified sequence 1</fullName>
        <shortName>MCT-1</shortName>
    </recommendedName>
</protein>
<accession>Q7ZV34</accession>
<evidence type="ECO:0000250" key="1"/>
<evidence type="ECO:0000255" key="2">
    <source>
        <dbReference type="PROSITE-ProRule" id="PRU00161"/>
    </source>
</evidence>
<evidence type="ECO:0000305" key="3"/>
<dbReference type="EMBL" id="BC046019">
    <property type="protein sequence ID" value="AAH46019.1"/>
    <property type="molecule type" value="mRNA"/>
</dbReference>
<dbReference type="RefSeq" id="NP_957365.1">
    <property type="nucleotide sequence ID" value="NM_201071.1"/>
</dbReference>
<dbReference type="SMR" id="Q7ZV34"/>
<dbReference type="FunCoup" id="Q7ZV34">
    <property type="interactions" value="2159"/>
</dbReference>
<dbReference type="STRING" id="7955.ENSDARP00000037227"/>
<dbReference type="PaxDb" id="7955-ENSDARP00000037227"/>
<dbReference type="GeneID" id="394046"/>
<dbReference type="KEGG" id="dre:394046"/>
<dbReference type="AGR" id="ZFIN:ZDB-GENE-040426-957"/>
<dbReference type="CTD" id="28985"/>
<dbReference type="ZFIN" id="ZDB-GENE-040426-957">
    <property type="gene designation" value="mcts1"/>
</dbReference>
<dbReference type="eggNOG" id="KOG2523">
    <property type="taxonomic scope" value="Eukaryota"/>
</dbReference>
<dbReference type="InParanoid" id="Q7ZV34"/>
<dbReference type="OrthoDB" id="10249667at2759"/>
<dbReference type="PhylomeDB" id="Q7ZV34"/>
<dbReference type="PRO" id="PR:Q7ZV34"/>
<dbReference type="Proteomes" id="UP000000437">
    <property type="component" value="Chromosome 14"/>
</dbReference>
<dbReference type="GO" id="GO:0005737">
    <property type="term" value="C:cytoplasm"/>
    <property type="evidence" value="ECO:0007669"/>
    <property type="project" value="UniProtKB-SubCell"/>
</dbReference>
<dbReference type="GO" id="GO:0003723">
    <property type="term" value="F:RNA binding"/>
    <property type="evidence" value="ECO:0007669"/>
    <property type="project" value="InterPro"/>
</dbReference>
<dbReference type="GO" id="GO:0001731">
    <property type="term" value="P:formation of translation preinitiation complex"/>
    <property type="evidence" value="ECO:0000318"/>
    <property type="project" value="GO_Central"/>
</dbReference>
<dbReference type="CDD" id="cd11609">
    <property type="entry name" value="MCT1_N"/>
    <property type="match status" value="1"/>
</dbReference>
<dbReference type="CDD" id="cd21155">
    <property type="entry name" value="PUA_MCTS-1-like"/>
    <property type="match status" value="1"/>
</dbReference>
<dbReference type="FunFam" id="3.10.400.20:FF:000001">
    <property type="entry name" value="Malignant T-cell-amplified sequence 1"/>
    <property type="match status" value="1"/>
</dbReference>
<dbReference type="Gene3D" id="3.10.400.20">
    <property type="match status" value="1"/>
</dbReference>
<dbReference type="InterPro" id="IPR016437">
    <property type="entry name" value="MCT-1/Tma20"/>
</dbReference>
<dbReference type="InterPro" id="IPR041366">
    <property type="entry name" value="Pre-PUA"/>
</dbReference>
<dbReference type="InterPro" id="IPR002478">
    <property type="entry name" value="PUA"/>
</dbReference>
<dbReference type="InterPro" id="IPR015947">
    <property type="entry name" value="PUA-like_sf"/>
</dbReference>
<dbReference type="InterPro" id="IPR004521">
    <property type="entry name" value="Uncharacterised_CHP00451"/>
</dbReference>
<dbReference type="NCBIfam" id="TIGR00451">
    <property type="entry name" value="unchar_dom_2"/>
    <property type="match status" value="1"/>
</dbReference>
<dbReference type="PANTHER" id="PTHR22798:SF0">
    <property type="entry name" value="MALIGNANT T-CELL-AMPLIFIED SEQUENCE 1"/>
    <property type="match status" value="1"/>
</dbReference>
<dbReference type="PANTHER" id="PTHR22798">
    <property type="entry name" value="MCT-1 PROTEIN"/>
    <property type="match status" value="1"/>
</dbReference>
<dbReference type="Pfam" id="PF17832">
    <property type="entry name" value="Pre-PUA"/>
    <property type="match status" value="1"/>
</dbReference>
<dbReference type="Pfam" id="PF01472">
    <property type="entry name" value="PUA"/>
    <property type="match status" value="1"/>
</dbReference>
<dbReference type="PIRSF" id="PIRSF005067">
    <property type="entry name" value="Tma_RNA-bind_prd"/>
    <property type="match status" value="1"/>
</dbReference>
<dbReference type="SMART" id="SM00359">
    <property type="entry name" value="PUA"/>
    <property type="match status" value="1"/>
</dbReference>
<dbReference type="SUPFAM" id="SSF88697">
    <property type="entry name" value="PUA domain-like"/>
    <property type="match status" value="1"/>
</dbReference>
<dbReference type="PROSITE" id="PS50890">
    <property type="entry name" value="PUA"/>
    <property type="match status" value="1"/>
</dbReference>
<keyword id="KW-0131">Cell cycle</keyword>
<keyword id="KW-0963">Cytoplasm</keyword>
<keyword id="KW-0341">Growth regulation</keyword>
<keyword id="KW-1185">Reference proteome</keyword>
<keyword id="KW-0804">Transcription</keyword>
<keyword id="KW-0805">Transcription regulation</keyword>
<reference key="1">
    <citation type="submission" date="2003-01" db="EMBL/GenBank/DDBJ databases">
        <authorList>
            <consortium name="NIH - Zebrafish Gene Collection (ZGC) project"/>
        </authorList>
    </citation>
    <scope>NUCLEOTIDE SEQUENCE [LARGE SCALE MRNA]</scope>
</reference>
<gene>
    <name type="primary">mcts1</name>
    <name type="ORF">zgc:56242</name>
</gene>
<comment type="function">
    <text evidence="1">Plays a role as translation enhancer and involved in cell cycle regulation.</text>
</comment>
<comment type="subcellular location">
    <subcellularLocation>
        <location evidence="1">Cytoplasm</location>
    </subcellularLocation>
</comment>
<comment type="domain">
    <text evidence="1">The PUA RNA-binding domain is critical for cap binding, but not sufficient for translation enhancer function.</text>
</comment>
<comment type="similarity">
    <text evidence="3">Belongs to the MCTS1 family.</text>
</comment>
<feature type="chain" id="PRO_0000344791" description="Malignant T-cell-amplified sequence 1">
    <location>
        <begin position="1"/>
        <end position="181"/>
    </location>
</feature>
<feature type="domain" description="PUA" evidence="2">
    <location>
        <begin position="92"/>
        <end position="171"/>
    </location>
</feature>